<comment type="function">
    <text evidence="1">Catalyzes the conversion of GTP to 2,5-diamino-6-ribosylamino-4(3H)-pyrimidinone 5'-phosphate (DARP), formate and pyrophosphate.</text>
</comment>
<comment type="catalytic activity">
    <reaction evidence="1">
        <text>GTP + 4 H2O = 2,5-diamino-6-hydroxy-4-(5-phosphoribosylamino)-pyrimidine + formate + 2 phosphate + 3 H(+)</text>
        <dbReference type="Rhea" id="RHEA:23704"/>
        <dbReference type="ChEBI" id="CHEBI:15377"/>
        <dbReference type="ChEBI" id="CHEBI:15378"/>
        <dbReference type="ChEBI" id="CHEBI:15740"/>
        <dbReference type="ChEBI" id="CHEBI:37565"/>
        <dbReference type="ChEBI" id="CHEBI:43474"/>
        <dbReference type="ChEBI" id="CHEBI:58614"/>
        <dbReference type="EC" id="3.5.4.25"/>
    </reaction>
</comment>
<comment type="cofactor">
    <cofactor evidence="1">
        <name>Zn(2+)</name>
        <dbReference type="ChEBI" id="CHEBI:29105"/>
    </cofactor>
    <text evidence="1">Binds 1 zinc ion per subunit.</text>
</comment>
<comment type="pathway">
    <text evidence="1">Cofactor biosynthesis; riboflavin biosynthesis; 5-amino-6-(D-ribitylamino)uracil from GTP: step 1/4.</text>
</comment>
<comment type="similarity">
    <text evidence="1">Belongs to the GTP cyclohydrolase II family.</text>
</comment>
<organism>
    <name type="scientific">Acinetobacter baumannii (strain AB0057)</name>
    <dbReference type="NCBI Taxonomy" id="480119"/>
    <lineage>
        <taxon>Bacteria</taxon>
        <taxon>Pseudomonadati</taxon>
        <taxon>Pseudomonadota</taxon>
        <taxon>Gammaproteobacteria</taxon>
        <taxon>Moraxellales</taxon>
        <taxon>Moraxellaceae</taxon>
        <taxon>Acinetobacter</taxon>
        <taxon>Acinetobacter calcoaceticus/baumannii complex</taxon>
    </lineage>
</organism>
<gene>
    <name evidence="1" type="primary">ribA</name>
    <name type="ordered locus">AB57_3559</name>
</gene>
<sequence length="200" mass="22323">MPIEFIATSKLPTAFGEFNISVFQDPVTGEEHVALSKGLENPPTGPVLVRVHSECLTGDAFASLKCDCGPQLQATQKLINEAGQGVILYLRQEGRGIGLTNKIRAYALQDQGHDTVDANLLLNLPADARRYDMCSIMLDHLKVKEVKLITNNPLKIQALKDQGINVVDRVPLTVGRNPFNEHYLKTKRERMDHLYQKDDF</sequence>
<dbReference type="EC" id="3.5.4.25" evidence="1"/>
<dbReference type="EMBL" id="CP001182">
    <property type="protein sequence ID" value="ACJ42924.1"/>
    <property type="molecule type" value="Genomic_DNA"/>
</dbReference>
<dbReference type="RefSeq" id="WP_001121172.1">
    <property type="nucleotide sequence ID" value="NC_011586.2"/>
</dbReference>
<dbReference type="SMR" id="B7IA66"/>
<dbReference type="KEGG" id="abn:AB57_3559"/>
<dbReference type="HOGENOM" id="CLU_020273_2_1_6"/>
<dbReference type="UniPathway" id="UPA00275">
    <property type="reaction ID" value="UER00400"/>
</dbReference>
<dbReference type="Proteomes" id="UP000007094">
    <property type="component" value="Chromosome"/>
</dbReference>
<dbReference type="GO" id="GO:0005829">
    <property type="term" value="C:cytosol"/>
    <property type="evidence" value="ECO:0007669"/>
    <property type="project" value="TreeGrafter"/>
</dbReference>
<dbReference type="GO" id="GO:0005525">
    <property type="term" value="F:GTP binding"/>
    <property type="evidence" value="ECO:0007669"/>
    <property type="project" value="UniProtKB-KW"/>
</dbReference>
<dbReference type="GO" id="GO:0003935">
    <property type="term" value="F:GTP cyclohydrolase II activity"/>
    <property type="evidence" value="ECO:0007669"/>
    <property type="project" value="UniProtKB-UniRule"/>
</dbReference>
<dbReference type="GO" id="GO:0008270">
    <property type="term" value="F:zinc ion binding"/>
    <property type="evidence" value="ECO:0007669"/>
    <property type="project" value="UniProtKB-UniRule"/>
</dbReference>
<dbReference type="GO" id="GO:0009231">
    <property type="term" value="P:riboflavin biosynthetic process"/>
    <property type="evidence" value="ECO:0007669"/>
    <property type="project" value="UniProtKB-UniRule"/>
</dbReference>
<dbReference type="CDD" id="cd00641">
    <property type="entry name" value="GTP_cyclohydro2"/>
    <property type="match status" value="1"/>
</dbReference>
<dbReference type="FunFam" id="3.40.50.10990:FF:000002">
    <property type="entry name" value="GTP cyclohydrolase-2"/>
    <property type="match status" value="1"/>
</dbReference>
<dbReference type="Gene3D" id="3.40.50.10990">
    <property type="entry name" value="GTP cyclohydrolase II"/>
    <property type="match status" value="1"/>
</dbReference>
<dbReference type="HAMAP" id="MF_00179">
    <property type="entry name" value="RibA"/>
    <property type="match status" value="1"/>
</dbReference>
<dbReference type="InterPro" id="IPR032677">
    <property type="entry name" value="GTP_cyclohydro_II"/>
</dbReference>
<dbReference type="InterPro" id="IPR000926">
    <property type="entry name" value="RibA"/>
</dbReference>
<dbReference type="InterPro" id="IPR036144">
    <property type="entry name" value="RibA-like_sf"/>
</dbReference>
<dbReference type="NCBIfam" id="NF001591">
    <property type="entry name" value="PRK00393.1"/>
    <property type="match status" value="1"/>
</dbReference>
<dbReference type="NCBIfam" id="TIGR00505">
    <property type="entry name" value="ribA"/>
    <property type="match status" value="1"/>
</dbReference>
<dbReference type="PANTHER" id="PTHR21327:SF18">
    <property type="entry name" value="3,4-DIHYDROXY-2-BUTANONE 4-PHOSPHATE SYNTHASE"/>
    <property type="match status" value="1"/>
</dbReference>
<dbReference type="PANTHER" id="PTHR21327">
    <property type="entry name" value="GTP CYCLOHYDROLASE II-RELATED"/>
    <property type="match status" value="1"/>
</dbReference>
<dbReference type="Pfam" id="PF00925">
    <property type="entry name" value="GTP_cyclohydro2"/>
    <property type="match status" value="1"/>
</dbReference>
<dbReference type="SUPFAM" id="SSF142695">
    <property type="entry name" value="RibA-like"/>
    <property type="match status" value="1"/>
</dbReference>
<proteinExistence type="inferred from homology"/>
<accession>B7IA66</accession>
<reference key="1">
    <citation type="journal article" date="2008" name="J. Bacteriol.">
        <title>Comparative genome sequence analysis of multidrug-resistant Acinetobacter baumannii.</title>
        <authorList>
            <person name="Adams M.D."/>
            <person name="Goglin K."/>
            <person name="Molyneaux N."/>
            <person name="Hujer K.M."/>
            <person name="Lavender H."/>
            <person name="Jamison J.J."/>
            <person name="MacDonald I.J."/>
            <person name="Martin K.M."/>
            <person name="Russo T."/>
            <person name="Campagnari A.A."/>
            <person name="Hujer A.M."/>
            <person name="Bonomo R.A."/>
            <person name="Gill S.R."/>
        </authorList>
    </citation>
    <scope>NUCLEOTIDE SEQUENCE [LARGE SCALE GENOMIC DNA]</scope>
    <source>
        <strain>AB0057</strain>
    </source>
</reference>
<protein>
    <recommendedName>
        <fullName evidence="1">GTP cyclohydrolase-2</fullName>
        <ecNumber evidence="1">3.5.4.25</ecNumber>
    </recommendedName>
    <alternativeName>
        <fullName evidence="1">GTP cyclohydrolase II</fullName>
    </alternativeName>
</protein>
<name>RIBA_ACIB5</name>
<evidence type="ECO:0000255" key="1">
    <source>
        <dbReference type="HAMAP-Rule" id="MF_00179"/>
    </source>
</evidence>
<keyword id="KW-0342">GTP-binding</keyword>
<keyword id="KW-0378">Hydrolase</keyword>
<keyword id="KW-0479">Metal-binding</keyword>
<keyword id="KW-0547">Nucleotide-binding</keyword>
<keyword id="KW-0686">Riboflavin biosynthesis</keyword>
<keyword id="KW-0862">Zinc</keyword>
<feature type="chain" id="PRO_1000118425" description="GTP cyclohydrolase-2">
    <location>
        <begin position="1"/>
        <end position="200"/>
    </location>
</feature>
<feature type="active site" description="Proton acceptor" evidence="1">
    <location>
        <position position="127"/>
    </location>
</feature>
<feature type="active site" description="Nucleophile" evidence="1">
    <location>
        <position position="129"/>
    </location>
</feature>
<feature type="binding site" evidence="1">
    <location>
        <begin position="50"/>
        <end position="54"/>
    </location>
    <ligand>
        <name>GTP</name>
        <dbReference type="ChEBI" id="CHEBI:37565"/>
    </ligand>
</feature>
<feature type="binding site" evidence="1">
    <location>
        <position position="55"/>
    </location>
    <ligand>
        <name>Zn(2+)</name>
        <dbReference type="ChEBI" id="CHEBI:29105"/>
        <note>catalytic</note>
    </ligand>
</feature>
<feature type="binding site" evidence="1">
    <location>
        <position position="66"/>
    </location>
    <ligand>
        <name>Zn(2+)</name>
        <dbReference type="ChEBI" id="CHEBI:29105"/>
        <note>catalytic</note>
    </ligand>
</feature>
<feature type="binding site" evidence="1">
    <location>
        <position position="68"/>
    </location>
    <ligand>
        <name>Zn(2+)</name>
        <dbReference type="ChEBI" id="CHEBI:29105"/>
        <note>catalytic</note>
    </ligand>
</feature>
<feature type="binding site" evidence="1">
    <location>
        <position position="71"/>
    </location>
    <ligand>
        <name>GTP</name>
        <dbReference type="ChEBI" id="CHEBI:37565"/>
    </ligand>
</feature>
<feature type="binding site" evidence="1">
    <location>
        <begin position="93"/>
        <end position="95"/>
    </location>
    <ligand>
        <name>GTP</name>
        <dbReference type="ChEBI" id="CHEBI:37565"/>
    </ligand>
</feature>
<feature type="binding site" evidence="1">
    <location>
        <position position="115"/>
    </location>
    <ligand>
        <name>GTP</name>
        <dbReference type="ChEBI" id="CHEBI:37565"/>
    </ligand>
</feature>
<feature type="binding site" evidence="1">
    <location>
        <position position="150"/>
    </location>
    <ligand>
        <name>GTP</name>
        <dbReference type="ChEBI" id="CHEBI:37565"/>
    </ligand>
</feature>
<feature type="binding site" evidence="1">
    <location>
        <position position="155"/>
    </location>
    <ligand>
        <name>GTP</name>
        <dbReference type="ChEBI" id="CHEBI:37565"/>
    </ligand>
</feature>